<gene>
    <name evidence="1" type="primary">murG</name>
    <name type="ordered locus">Swoo_4533</name>
</gene>
<protein>
    <recommendedName>
        <fullName evidence="1">UDP-N-acetylglucosamine--N-acetylmuramyl-(pentapeptide) pyrophosphoryl-undecaprenol N-acetylglucosamine transferase</fullName>
        <ecNumber evidence="1">2.4.1.227</ecNumber>
    </recommendedName>
    <alternativeName>
        <fullName evidence="1">Undecaprenyl-PP-MurNAc-pentapeptide-UDPGlcNAc GlcNAc transferase</fullName>
    </alternativeName>
</protein>
<name>MURG_SHEWM</name>
<proteinExistence type="inferred from homology"/>
<accession>B1KKX7</accession>
<dbReference type="EC" id="2.4.1.227" evidence="1"/>
<dbReference type="EMBL" id="CP000961">
    <property type="protein sequence ID" value="ACA88783.1"/>
    <property type="molecule type" value="Genomic_DNA"/>
</dbReference>
<dbReference type="RefSeq" id="WP_012327109.1">
    <property type="nucleotide sequence ID" value="NC_010506.1"/>
</dbReference>
<dbReference type="SMR" id="B1KKX7"/>
<dbReference type="STRING" id="392500.Swoo_4533"/>
<dbReference type="CAZy" id="GT28">
    <property type="family name" value="Glycosyltransferase Family 28"/>
</dbReference>
<dbReference type="KEGG" id="swd:Swoo_4533"/>
<dbReference type="eggNOG" id="COG0707">
    <property type="taxonomic scope" value="Bacteria"/>
</dbReference>
<dbReference type="HOGENOM" id="CLU_037404_2_0_6"/>
<dbReference type="UniPathway" id="UPA00219"/>
<dbReference type="Proteomes" id="UP000002168">
    <property type="component" value="Chromosome"/>
</dbReference>
<dbReference type="GO" id="GO:0005886">
    <property type="term" value="C:plasma membrane"/>
    <property type="evidence" value="ECO:0007669"/>
    <property type="project" value="UniProtKB-SubCell"/>
</dbReference>
<dbReference type="GO" id="GO:0051991">
    <property type="term" value="F:UDP-N-acetyl-D-glucosamine:N-acetylmuramoyl-L-alanyl-D-glutamyl-meso-2,6-diaminopimelyl-D-alanyl-D-alanine-diphosphoundecaprenol 4-beta-N-acetylglucosaminlytransferase activity"/>
    <property type="evidence" value="ECO:0007669"/>
    <property type="project" value="RHEA"/>
</dbReference>
<dbReference type="GO" id="GO:0050511">
    <property type="term" value="F:undecaprenyldiphospho-muramoylpentapeptide beta-N-acetylglucosaminyltransferase activity"/>
    <property type="evidence" value="ECO:0007669"/>
    <property type="project" value="UniProtKB-UniRule"/>
</dbReference>
<dbReference type="GO" id="GO:0005975">
    <property type="term" value="P:carbohydrate metabolic process"/>
    <property type="evidence" value="ECO:0007669"/>
    <property type="project" value="InterPro"/>
</dbReference>
<dbReference type="GO" id="GO:0051301">
    <property type="term" value="P:cell division"/>
    <property type="evidence" value="ECO:0007669"/>
    <property type="project" value="UniProtKB-KW"/>
</dbReference>
<dbReference type="GO" id="GO:0071555">
    <property type="term" value="P:cell wall organization"/>
    <property type="evidence" value="ECO:0007669"/>
    <property type="project" value="UniProtKB-KW"/>
</dbReference>
<dbReference type="GO" id="GO:0030259">
    <property type="term" value="P:lipid glycosylation"/>
    <property type="evidence" value="ECO:0007669"/>
    <property type="project" value="UniProtKB-UniRule"/>
</dbReference>
<dbReference type="GO" id="GO:0009252">
    <property type="term" value="P:peptidoglycan biosynthetic process"/>
    <property type="evidence" value="ECO:0007669"/>
    <property type="project" value="UniProtKB-UniRule"/>
</dbReference>
<dbReference type="GO" id="GO:0008360">
    <property type="term" value="P:regulation of cell shape"/>
    <property type="evidence" value="ECO:0007669"/>
    <property type="project" value="UniProtKB-KW"/>
</dbReference>
<dbReference type="CDD" id="cd03785">
    <property type="entry name" value="GT28_MurG"/>
    <property type="match status" value="1"/>
</dbReference>
<dbReference type="Gene3D" id="3.40.50.2000">
    <property type="entry name" value="Glycogen Phosphorylase B"/>
    <property type="match status" value="2"/>
</dbReference>
<dbReference type="HAMAP" id="MF_00033">
    <property type="entry name" value="MurG"/>
    <property type="match status" value="1"/>
</dbReference>
<dbReference type="InterPro" id="IPR006009">
    <property type="entry name" value="GlcNAc_MurG"/>
</dbReference>
<dbReference type="InterPro" id="IPR007235">
    <property type="entry name" value="Glyco_trans_28_C"/>
</dbReference>
<dbReference type="InterPro" id="IPR004276">
    <property type="entry name" value="GlycoTrans_28_N"/>
</dbReference>
<dbReference type="NCBIfam" id="TIGR01133">
    <property type="entry name" value="murG"/>
    <property type="match status" value="1"/>
</dbReference>
<dbReference type="PANTHER" id="PTHR21015:SF22">
    <property type="entry name" value="GLYCOSYLTRANSFERASE"/>
    <property type="match status" value="1"/>
</dbReference>
<dbReference type="PANTHER" id="PTHR21015">
    <property type="entry name" value="UDP-N-ACETYLGLUCOSAMINE--N-ACETYLMURAMYL-(PENTAPEPTIDE) PYROPHOSPHORYL-UNDECAPRENOL N-ACETYLGLUCOSAMINE TRANSFERASE 1"/>
    <property type="match status" value="1"/>
</dbReference>
<dbReference type="Pfam" id="PF04101">
    <property type="entry name" value="Glyco_tran_28_C"/>
    <property type="match status" value="1"/>
</dbReference>
<dbReference type="Pfam" id="PF03033">
    <property type="entry name" value="Glyco_transf_28"/>
    <property type="match status" value="1"/>
</dbReference>
<dbReference type="SUPFAM" id="SSF53756">
    <property type="entry name" value="UDP-Glycosyltransferase/glycogen phosphorylase"/>
    <property type="match status" value="1"/>
</dbReference>
<sequence>MTNVSDEKRILIMAGGTGGHVFPALAVAKYLSKQGWKVRWLGTAERMEARLVPQHGFDIDFIDIKGVRGNGVVRKLAAPFKVLRSITQARVVIKEFQPDVVLGMGGFASGPGGVAARLSGIPLVLHEQNAIPGMTNKILSRIASQVLCAFEDTFDQVQAEVVGNPIREELIALGQTPKDAGAKESLKVLVVGGSLGAKVFNDLMPTVTADMSKTHLITVWHQVGKGNLQSVKGEYQRLGLDGSVSVAEFIDDMEAAYRWADVVLCRSGALTVSELAAIGLPSLLVPYPHAVDDHQTKNAQVLVKAGGAFLLPQPILDIDKLIGKLQILSSDRDELDQMGQRAKSVGVIDATQKVADVCIRLAGKS</sequence>
<comment type="function">
    <text evidence="1">Cell wall formation. Catalyzes the transfer of a GlcNAc subunit on undecaprenyl-pyrophosphoryl-MurNAc-pentapeptide (lipid intermediate I) to form undecaprenyl-pyrophosphoryl-MurNAc-(pentapeptide)GlcNAc (lipid intermediate II).</text>
</comment>
<comment type="catalytic activity">
    <reaction evidence="1">
        <text>di-trans,octa-cis-undecaprenyl diphospho-N-acetyl-alpha-D-muramoyl-L-alanyl-D-glutamyl-meso-2,6-diaminopimeloyl-D-alanyl-D-alanine + UDP-N-acetyl-alpha-D-glucosamine = di-trans,octa-cis-undecaprenyl diphospho-[N-acetyl-alpha-D-glucosaminyl-(1-&gt;4)]-N-acetyl-alpha-D-muramoyl-L-alanyl-D-glutamyl-meso-2,6-diaminopimeloyl-D-alanyl-D-alanine + UDP + H(+)</text>
        <dbReference type="Rhea" id="RHEA:31227"/>
        <dbReference type="ChEBI" id="CHEBI:15378"/>
        <dbReference type="ChEBI" id="CHEBI:57705"/>
        <dbReference type="ChEBI" id="CHEBI:58223"/>
        <dbReference type="ChEBI" id="CHEBI:61387"/>
        <dbReference type="ChEBI" id="CHEBI:61388"/>
        <dbReference type="EC" id="2.4.1.227"/>
    </reaction>
</comment>
<comment type="pathway">
    <text evidence="1">Cell wall biogenesis; peptidoglycan biosynthesis.</text>
</comment>
<comment type="subcellular location">
    <subcellularLocation>
        <location evidence="1">Cell inner membrane</location>
        <topology evidence="1">Peripheral membrane protein</topology>
        <orientation evidence="1">Cytoplasmic side</orientation>
    </subcellularLocation>
</comment>
<comment type="similarity">
    <text evidence="1">Belongs to the glycosyltransferase 28 family. MurG subfamily.</text>
</comment>
<organism>
    <name type="scientific">Shewanella woodyi (strain ATCC 51908 / MS32)</name>
    <dbReference type="NCBI Taxonomy" id="392500"/>
    <lineage>
        <taxon>Bacteria</taxon>
        <taxon>Pseudomonadati</taxon>
        <taxon>Pseudomonadota</taxon>
        <taxon>Gammaproteobacteria</taxon>
        <taxon>Alteromonadales</taxon>
        <taxon>Shewanellaceae</taxon>
        <taxon>Shewanella</taxon>
    </lineage>
</organism>
<keyword id="KW-0131">Cell cycle</keyword>
<keyword id="KW-0132">Cell division</keyword>
<keyword id="KW-0997">Cell inner membrane</keyword>
<keyword id="KW-1003">Cell membrane</keyword>
<keyword id="KW-0133">Cell shape</keyword>
<keyword id="KW-0961">Cell wall biogenesis/degradation</keyword>
<keyword id="KW-0328">Glycosyltransferase</keyword>
<keyword id="KW-0472">Membrane</keyword>
<keyword id="KW-0573">Peptidoglycan synthesis</keyword>
<keyword id="KW-1185">Reference proteome</keyword>
<keyword id="KW-0808">Transferase</keyword>
<feature type="chain" id="PRO_1000090473" description="UDP-N-acetylglucosamine--N-acetylmuramyl-(pentapeptide) pyrophosphoryl-undecaprenol N-acetylglucosamine transferase">
    <location>
        <begin position="1"/>
        <end position="365"/>
    </location>
</feature>
<feature type="binding site" evidence="1">
    <location>
        <begin position="17"/>
        <end position="19"/>
    </location>
    <ligand>
        <name>UDP-N-acetyl-alpha-D-glucosamine</name>
        <dbReference type="ChEBI" id="CHEBI:57705"/>
    </ligand>
</feature>
<feature type="binding site" evidence="1">
    <location>
        <position position="129"/>
    </location>
    <ligand>
        <name>UDP-N-acetyl-alpha-D-glucosamine</name>
        <dbReference type="ChEBI" id="CHEBI:57705"/>
    </ligand>
</feature>
<feature type="binding site" evidence="1">
    <location>
        <position position="167"/>
    </location>
    <ligand>
        <name>UDP-N-acetyl-alpha-D-glucosamine</name>
        <dbReference type="ChEBI" id="CHEBI:57705"/>
    </ligand>
</feature>
<feature type="binding site" evidence="1">
    <location>
        <position position="194"/>
    </location>
    <ligand>
        <name>UDP-N-acetyl-alpha-D-glucosamine</name>
        <dbReference type="ChEBI" id="CHEBI:57705"/>
    </ligand>
</feature>
<feature type="binding site" evidence="1">
    <location>
        <position position="250"/>
    </location>
    <ligand>
        <name>UDP-N-acetyl-alpha-D-glucosamine</name>
        <dbReference type="ChEBI" id="CHEBI:57705"/>
    </ligand>
</feature>
<feature type="binding site" evidence="1">
    <location>
        <begin position="269"/>
        <end position="274"/>
    </location>
    <ligand>
        <name>UDP-N-acetyl-alpha-D-glucosamine</name>
        <dbReference type="ChEBI" id="CHEBI:57705"/>
    </ligand>
</feature>
<feature type="binding site" evidence="1">
    <location>
        <position position="295"/>
    </location>
    <ligand>
        <name>UDP-N-acetyl-alpha-D-glucosamine</name>
        <dbReference type="ChEBI" id="CHEBI:57705"/>
    </ligand>
</feature>
<evidence type="ECO:0000255" key="1">
    <source>
        <dbReference type="HAMAP-Rule" id="MF_00033"/>
    </source>
</evidence>
<reference key="1">
    <citation type="submission" date="2008-02" db="EMBL/GenBank/DDBJ databases">
        <title>Complete sequence of Shewanella woodyi ATCC 51908.</title>
        <authorList>
            <consortium name="US DOE Joint Genome Institute"/>
            <person name="Copeland A."/>
            <person name="Lucas S."/>
            <person name="Lapidus A."/>
            <person name="Glavina del Rio T."/>
            <person name="Dalin E."/>
            <person name="Tice H."/>
            <person name="Bruce D."/>
            <person name="Goodwin L."/>
            <person name="Pitluck S."/>
            <person name="Sims D."/>
            <person name="Brettin T."/>
            <person name="Detter J.C."/>
            <person name="Han C."/>
            <person name="Kuske C.R."/>
            <person name="Schmutz J."/>
            <person name="Larimer F."/>
            <person name="Land M."/>
            <person name="Hauser L."/>
            <person name="Kyrpides N."/>
            <person name="Lykidis A."/>
            <person name="Zhao J.-S."/>
            <person name="Richardson P."/>
        </authorList>
    </citation>
    <scope>NUCLEOTIDE SEQUENCE [LARGE SCALE GENOMIC DNA]</scope>
    <source>
        <strain>ATCC 51908 / MS32</strain>
    </source>
</reference>